<protein>
    <recommendedName>
        <fullName>NADH-ubiquinone oxidoreductase chain 4L</fullName>
        <ecNumber>7.1.1.2</ecNumber>
    </recommendedName>
    <alternativeName>
        <fullName>NADH dehydrogenase subunit 4L</fullName>
    </alternativeName>
</protein>
<gene>
    <name type="primary">MT-ND4L</name>
    <name type="synonym">MTND4L</name>
    <name type="synonym">NADH4L</name>
    <name type="synonym">ND4L</name>
</gene>
<evidence type="ECO:0000250" key="1">
    <source>
        <dbReference type="UniProtKB" id="P03901"/>
    </source>
</evidence>
<evidence type="ECO:0000250" key="2">
    <source>
        <dbReference type="UniProtKB" id="P03902"/>
    </source>
</evidence>
<evidence type="ECO:0000255" key="3"/>
<evidence type="ECO:0000305" key="4"/>
<proteinExistence type="inferred from homology"/>
<feature type="chain" id="PRO_0000118477" description="NADH-ubiquinone oxidoreductase chain 4L">
    <location>
        <begin position="1"/>
        <end position="98"/>
    </location>
</feature>
<feature type="transmembrane region" description="Helical" evidence="3">
    <location>
        <begin position="1"/>
        <end position="21"/>
    </location>
</feature>
<feature type="transmembrane region" description="Helical" evidence="3">
    <location>
        <begin position="29"/>
        <end position="49"/>
    </location>
</feature>
<feature type="transmembrane region" description="Helical" evidence="3">
    <location>
        <begin position="58"/>
        <end position="78"/>
    </location>
</feature>
<name>NU4LM_PONAB</name>
<organism>
    <name type="scientific">Pongo abelii</name>
    <name type="common">Sumatran orangutan</name>
    <name type="synonym">Pongo pygmaeus abelii</name>
    <dbReference type="NCBI Taxonomy" id="9601"/>
    <lineage>
        <taxon>Eukaryota</taxon>
        <taxon>Metazoa</taxon>
        <taxon>Chordata</taxon>
        <taxon>Craniata</taxon>
        <taxon>Vertebrata</taxon>
        <taxon>Euteleostomi</taxon>
        <taxon>Mammalia</taxon>
        <taxon>Eutheria</taxon>
        <taxon>Euarchontoglires</taxon>
        <taxon>Primates</taxon>
        <taxon>Haplorrhini</taxon>
        <taxon>Catarrhini</taxon>
        <taxon>Hominidae</taxon>
        <taxon>Pongo</taxon>
    </lineage>
</organism>
<sequence length="98" mass="10782">MPLIYMNITLAFTMSLLGMLVYRSHLMSSLLCLEGMMLSLFIMITLMTLNTHSLLANIMPITMLVFAACEAAVGLALLASISNTYGLDYVNNLNLLQC</sequence>
<geneLocation type="mitochondrion"/>
<accession>P61795</accession>
<accession>Q35585</accession>
<keyword id="KW-0249">Electron transport</keyword>
<keyword id="KW-0472">Membrane</keyword>
<keyword id="KW-0496">Mitochondrion</keyword>
<keyword id="KW-0999">Mitochondrion inner membrane</keyword>
<keyword id="KW-0520">NAD</keyword>
<keyword id="KW-1185">Reference proteome</keyword>
<keyword id="KW-0679">Respiratory chain</keyword>
<keyword id="KW-1278">Translocase</keyword>
<keyword id="KW-0812">Transmembrane</keyword>
<keyword id="KW-1133">Transmembrane helix</keyword>
<keyword id="KW-0813">Transport</keyword>
<keyword id="KW-0830">Ubiquinone</keyword>
<comment type="function">
    <text evidence="1">Core subunit of the mitochondrial membrane respiratory chain NADH dehydrogenase (Complex I) which catalyzes electron transfer from NADH through the respiratory chain, using ubiquinone as an electron acceptor. Part of the enzyme membrane arm which is embedded in the lipid bilayer and involved in proton translocation.</text>
</comment>
<comment type="catalytic activity">
    <reaction evidence="1">
        <text>a ubiquinone + NADH + 5 H(+)(in) = a ubiquinol + NAD(+) + 4 H(+)(out)</text>
        <dbReference type="Rhea" id="RHEA:29091"/>
        <dbReference type="Rhea" id="RHEA-COMP:9565"/>
        <dbReference type="Rhea" id="RHEA-COMP:9566"/>
        <dbReference type="ChEBI" id="CHEBI:15378"/>
        <dbReference type="ChEBI" id="CHEBI:16389"/>
        <dbReference type="ChEBI" id="CHEBI:17976"/>
        <dbReference type="ChEBI" id="CHEBI:57540"/>
        <dbReference type="ChEBI" id="CHEBI:57945"/>
        <dbReference type="EC" id="7.1.1.2"/>
    </reaction>
    <physiologicalReaction direction="left-to-right" evidence="1">
        <dbReference type="Rhea" id="RHEA:29092"/>
    </physiologicalReaction>
</comment>
<comment type="subunit">
    <text evidence="2">Core subunit of respiratory chain NADH dehydrogenase (Complex I) which is composed of 45 different subunits.</text>
</comment>
<comment type="subcellular location">
    <subcellularLocation>
        <location evidence="2">Mitochondrion inner membrane</location>
        <topology evidence="3">Multi-pass membrane protein</topology>
    </subcellularLocation>
</comment>
<comment type="similarity">
    <text evidence="4">Belongs to the complex I subunit 4L family.</text>
</comment>
<reference key="1">
    <citation type="journal article" date="1996" name="J. Mol. Evol.">
        <title>The mitochondrial DNA molecule of Sumatran orangutan and a molecular proposal for two (Bornean and Sumatran) species of orangutan.</title>
        <authorList>
            <person name="Xu X."/>
            <person name="Arnason U."/>
        </authorList>
    </citation>
    <scope>NUCLEOTIDE SEQUENCE [LARGE SCALE GENOMIC DNA]</scope>
</reference>
<dbReference type="EC" id="7.1.1.2"/>
<dbReference type="EMBL" id="X97707">
    <property type="protein sequence ID" value="CAA66291.1"/>
    <property type="molecule type" value="Genomic_DNA"/>
</dbReference>
<dbReference type="RefSeq" id="NP_007843.1">
    <property type="nucleotide sequence ID" value="NC_002083.1"/>
</dbReference>
<dbReference type="SMR" id="P61795"/>
<dbReference type="FunCoup" id="P61795">
    <property type="interactions" value="271"/>
</dbReference>
<dbReference type="STRING" id="9601.ENSPPYP00000023447"/>
<dbReference type="Ensembl" id="ENSPPYT00000024445.1">
    <property type="protein sequence ID" value="ENSPPYP00000023447.1"/>
    <property type="gene ID" value="ENSPPYG00000020966.1"/>
</dbReference>
<dbReference type="GeneID" id="808477"/>
<dbReference type="KEGG" id="pon:808477"/>
<dbReference type="CTD" id="4539"/>
<dbReference type="eggNOG" id="KOG4669">
    <property type="taxonomic scope" value="Eukaryota"/>
</dbReference>
<dbReference type="GeneTree" id="ENSGT00390000004755"/>
<dbReference type="HOGENOM" id="CLU_182394_0_0_1"/>
<dbReference type="InParanoid" id="P61795"/>
<dbReference type="OMA" id="MYRSHLM"/>
<dbReference type="TreeFam" id="TF338190"/>
<dbReference type="Proteomes" id="UP000001595">
    <property type="component" value="Mitochondrion"/>
</dbReference>
<dbReference type="GO" id="GO:0005743">
    <property type="term" value="C:mitochondrial inner membrane"/>
    <property type="evidence" value="ECO:0000250"/>
    <property type="project" value="UniProtKB"/>
</dbReference>
<dbReference type="GO" id="GO:0045271">
    <property type="term" value="C:respiratory chain complex I"/>
    <property type="evidence" value="ECO:0000250"/>
    <property type="project" value="UniProtKB"/>
</dbReference>
<dbReference type="GO" id="GO:0008137">
    <property type="term" value="F:NADH dehydrogenase (ubiquinone) activity"/>
    <property type="evidence" value="ECO:0000250"/>
    <property type="project" value="UniProtKB"/>
</dbReference>
<dbReference type="GO" id="GO:0042773">
    <property type="term" value="P:ATP synthesis coupled electron transport"/>
    <property type="evidence" value="ECO:0007669"/>
    <property type="project" value="InterPro"/>
</dbReference>
<dbReference type="FunFam" id="1.10.287.3510:FF:000002">
    <property type="entry name" value="NADH-ubiquinone oxidoreductase chain 4L"/>
    <property type="match status" value="1"/>
</dbReference>
<dbReference type="Gene3D" id="1.10.287.3510">
    <property type="match status" value="1"/>
</dbReference>
<dbReference type="InterPro" id="IPR001133">
    <property type="entry name" value="NADH_UbQ_OxRdtase_chain4L/K"/>
</dbReference>
<dbReference type="InterPro" id="IPR039428">
    <property type="entry name" value="NUOK/Mnh_C1-like"/>
</dbReference>
<dbReference type="PANTHER" id="PTHR11434:SF0">
    <property type="entry name" value="NADH-UBIQUINONE OXIDOREDUCTASE CHAIN 4L"/>
    <property type="match status" value="1"/>
</dbReference>
<dbReference type="PANTHER" id="PTHR11434">
    <property type="entry name" value="NADH-UBIQUINONE OXIDOREDUCTASE SUBUNIT ND4L"/>
    <property type="match status" value="1"/>
</dbReference>
<dbReference type="Pfam" id="PF00420">
    <property type="entry name" value="Oxidored_q2"/>
    <property type="match status" value="1"/>
</dbReference>